<keyword id="KW-1003">Cell membrane</keyword>
<keyword id="KW-0472">Membrane</keyword>
<keyword id="KW-1185">Reference proteome</keyword>
<keyword id="KW-0812">Transmembrane</keyword>
<keyword id="KW-1133">Transmembrane helix</keyword>
<keyword id="KW-0813">Transport</keyword>
<proteinExistence type="inferred from homology"/>
<organism>
    <name type="scientific">Bacillus subtilis (strain 168)</name>
    <dbReference type="NCBI Taxonomy" id="224308"/>
    <lineage>
        <taxon>Bacteria</taxon>
        <taxon>Bacillati</taxon>
        <taxon>Bacillota</taxon>
        <taxon>Bacilli</taxon>
        <taxon>Bacillales</taxon>
        <taxon>Bacillaceae</taxon>
        <taxon>Bacillus</taxon>
    </lineage>
</organism>
<sequence>MRNGFGKTLSLGIQHVLAMYAGAIVVPLIVGKAMGLTVEQLTYLVSIDIFMCGVATLLQVWSNRFFGIGLPVVLGCTFTAVSPMIAIGSEYGVSTVYGSIIASGILVILISFFFGKLVSFFPPVVTGSVVTIIGITLMPVAMNNMAGGEGSADFGDLSNLALAFTVLSIIVLLYRFTKGFIKSVSILIGILIGTFIAYFMGKVQFDNVSDAAVVQMIQPFYFGAPSFHAAPIITMSIVAIVSLVESTGVYFALGDLTNRRLTEIDLSKGYRAEGLAVLLGGIFNAFPYTAFSQNVGLVQLTGIKKNAVIVVTGVILMAFGLFPKIAAFTTIIPSAVLGGAMVAMFGMVIAYGIKMLSRIDFAKQENLLIVACSVGLGLGVTVVPDIFKQLPSALTLLTTNGIVAGSFTAVVLNIVYNVFSKAKKIEQEADLAEQKTAV</sequence>
<reference key="1">
    <citation type="journal article" date="1997" name="J. Bacteriol.">
        <title>Xanthine metabolism in Bacillus subtilis: characterization of the xpt-pbuX operon and evidence for purine- and nitrogen-controlled expression of genes involved in xanthine salvage and catabolism.</title>
        <authorList>
            <person name="Christiansen L.C."/>
            <person name="Schou S."/>
            <person name="Nygaard P."/>
            <person name="Saxild H.H."/>
        </authorList>
    </citation>
    <scope>NUCLEOTIDE SEQUENCE [GENOMIC DNA]</scope>
    <source>
        <strain>168</strain>
    </source>
</reference>
<reference key="2">
    <citation type="journal article" date="1996" name="Microbiology">
        <title>Organization of the Bacillus subtilis 168 chromosome between kdg and the attachment site of the SP beta prophage: use of long accurate PCR and yeast artificial chromosomes for sequencing.</title>
        <authorList>
            <person name="Capuano V."/>
            <person name="Galleron N."/>
            <person name="Pujic P."/>
            <person name="Sorokin A."/>
            <person name="Ehrlich S.D."/>
        </authorList>
    </citation>
    <scope>NUCLEOTIDE SEQUENCE [GENOMIC DNA]</scope>
    <source>
        <strain>168 / Marburg / ATCC 6051 / DSM 10 / JCM 1465 / NBRC 13719 / NCIMB 3610 / NRRL NRS-744 / VKM B-501</strain>
    </source>
</reference>
<reference key="3">
    <citation type="journal article" date="1997" name="Nature">
        <title>The complete genome sequence of the Gram-positive bacterium Bacillus subtilis.</title>
        <authorList>
            <person name="Kunst F."/>
            <person name="Ogasawara N."/>
            <person name="Moszer I."/>
            <person name="Albertini A.M."/>
            <person name="Alloni G."/>
            <person name="Azevedo V."/>
            <person name="Bertero M.G."/>
            <person name="Bessieres P."/>
            <person name="Bolotin A."/>
            <person name="Borchert S."/>
            <person name="Borriss R."/>
            <person name="Boursier L."/>
            <person name="Brans A."/>
            <person name="Braun M."/>
            <person name="Brignell S.C."/>
            <person name="Bron S."/>
            <person name="Brouillet S."/>
            <person name="Bruschi C.V."/>
            <person name="Caldwell B."/>
            <person name="Capuano V."/>
            <person name="Carter N.M."/>
            <person name="Choi S.-K."/>
            <person name="Codani J.-J."/>
            <person name="Connerton I.F."/>
            <person name="Cummings N.J."/>
            <person name="Daniel R.A."/>
            <person name="Denizot F."/>
            <person name="Devine K.M."/>
            <person name="Duesterhoeft A."/>
            <person name="Ehrlich S.D."/>
            <person name="Emmerson P.T."/>
            <person name="Entian K.-D."/>
            <person name="Errington J."/>
            <person name="Fabret C."/>
            <person name="Ferrari E."/>
            <person name="Foulger D."/>
            <person name="Fritz C."/>
            <person name="Fujita M."/>
            <person name="Fujita Y."/>
            <person name="Fuma S."/>
            <person name="Galizzi A."/>
            <person name="Galleron N."/>
            <person name="Ghim S.-Y."/>
            <person name="Glaser P."/>
            <person name="Goffeau A."/>
            <person name="Golightly E.J."/>
            <person name="Grandi G."/>
            <person name="Guiseppi G."/>
            <person name="Guy B.J."/>
            <person name="Haga K."/>
            <person name="Haiech J."/>
            <person name="Harwood C.R."/>
            <person name="Henaut A."/>
            <person name="Hilbert H."/>
            <person name="Holsappel S."/>
            <person name="Hosono S."/>
            <person name="Hullo M.-F."/>
            <person name="Itaya M."/>
            <person name="Jones L.-M."/>
            <person name="Joris B."/>
            <person name="Karamata D."/>
            <person name="Kasahara Y."/>
            <person name="Klaerr-Blanchard M."/>
            <person name="Klein C."/>
            <person name="Kobayashi Y."/>
            <person name="Koetter P."/>
            <person name="Koningstein G."/>
            <person name="Krogh S."/>
            <person name="Kumano M."/>
            <person name="Kurita K."/>
            <person name="Lapidus A."/>
            <person name="Lardinois S."/>
            <person name="Lauber J."/>
            <person name="Lazarevic V."/>
            <person name="Lee S.-M."/>
            <person name="Levine A."/>
            <person name="Liu H."/>
            <person name="Masuda S."/>
            <person name="Mauel C."/>
            <person name="Medigue C."/>
            <person name="Medina N."/>
            <person name="Mellado R.P."/>
            <person name="Mizuno M."/>
            <person name="Moestl D."/>
            <person name="Nakai S."/>
            <person name="Noback M."/>
            <person name="Noone D."/>
            <person name="O'Reilly M."/>
            <person name="Ogawa K."/>
            <person name="Ogiwara A."/>
            <person name="Oudega B."/>
            <person name="Park S.-H."/>
            <person name="Parro V."/>
            <person name="Pohl T.M."/>
            <person name="Portetelle D."/>
            <person name="Porwollik S."/>
            <person name="Prescott A.M."/>
            <person name="Presecan E."/>
            <person name="Pujic P."/>
            <person name="Purnelle B."/>
            <person name="Rapoport G."/>
            <person name="Rey M."/>
            <person name="Reynolds S."/>
            <person name="Rieger M."/>
            <person name="Rivolta C."/>
            <person name="Rocha E."/>
            <person name="Roche B."/>
            <person name="Rose M."/>
            <person name="Sadaie Y."/>
            <person name="Sato T."/>
            <person name="Scanlan E."/>
            <person name="Schleich S."/>
            <person name="Schroeter R."/>
            <person name="Scoffone F."/>
            <person name="Sekiguchi J."/>
            <person name="Sekowska A."/>
            <person name="Seror S.J."/>
            <person name="Serror P."/>
            <person name="Shin B.-S."/>
            <person name="Soldo B."/>
            <person name="Sorokin A."/>
            <person name="Tacconi E."/>
            <person name="Takagi T."/>
            <person name="Takahashi H."/>
            <person name="Takemaru K."/>
            <person name="Takeuchi M."/>
            <person name="Tamakoshi A."/>
            <person name="Tanaka T."/>
            <person name="Terpstra P."/>
            <person name="Tognoni A."/>
            <person name="Tosato V."/>
            <person name="Uchiyama S."/>
            <person name="Vandenbol M."/>
            <person name="Vannier F."/>
            <person name="Vassarotti A."/>
            <person name="Viari A."/>
            <person name="Wambutt R."/>
            <person name="Wedler E."/>
            <person name="Wedler H."/>
            <person name="Weitzenegger T."/>
            <person name="Winters P."/>
            <person name="Wipat A."/>
            <person name="Yamamoto H."/>
            <person name="Yamane K."/>
            <person name="Yasumoto K."/>
            <person name="Yata K."/>
            <person name="Yoshida K."/>
            <person name="Yoshikawa H.-F."/>
            <person name="Zumstein E."/>
            <person name="Yoshikawa H."/>
            <person name="Danchin A."/>
        </authorList>
    </citation>
    <scope>NUCLEOTIDE SEQUENCE [LARGE SCALE GENOMIC DNA]</scope>
    <source>
        <strain>168</strain>
    </source>
</reference>
<gene>
    <name type="primary">pbuX</name>
    <name type="synonym">ypaQ</name>
    <name type="ordered locus">BSU22060</name>
</gene>
<comment type="function">
    <text>Transport of xanthine in the cell.</text>
</comment>
<comment type="subcellular location">
    <subcellularLocation>
        <location>Cell membrane</location>
        <topology>Multi-pass membrane protein</topology>
    </subcellularLocation>
</comment>
<comment type="similarity">
    <text evidence="2">Belongs to the nucleobase:cation symporter-2 (NCS2) (TC 2.A.40) family.</text>
</comment>
<protein>
    <recommendedName>
        <fullName>Xanthine permease</fullName>
    </recommendedName>
</protein>
<accession>P42086</accession>
<evidence type="ECO:0000255" key="1"/>
<evidence type="ECO:0000305" key="2"/>
<dbReference type="EMBL" id="X83878">
    <property type="protein sequence ID" value="CAA58759.1"/>
    <property type="molecule type" value="Genomic_DNA"/>
</dbReference>
<dbReference type="EMBL" id="L77246">
    <property type="protein sequence ID" value="AAA96612.1"/>
    <property type="molecule type" value="Genomic_DNA"/>
</dbReference>
<dbReference type="EMBL" id="AL009126">
    <property type="protein sequence ID" value="CAB14123.1"/>
    <property type="molecule type" value="Genomic_DNA"/>
</dbReference>
<dbReference type="PIR" id="S51310">
    <property type="entry name" value="S51310"/>
</dbReference>
<dbReference type="RefSeq" id="NP_390088.1">
    <property type="nucleotide sequence ID" value="NC_000964.3"/>
</dbReference>
<dbReference type="RefSeq" id="WP_003230748.1">
    <property type="nucleotide sequence ID" value="NZ_OZ025638.1"/>
</dbReference>
<dbReference type="SMR" id="P42086"/>
<dbReference type="FunCoup" id="P42086">
    <property type="interactions" value="147"/>
</dbReference>
<dbReference type="STRING" id="224308.BSU22060"/>
<dbReference type="TCDB" id="2.A.40.3.1">
    <property type="family name" value="the nucleobase/ascorbate transporter (nat) or nucleobase:cation symporter-2 (ncs2) family"/>
</dbReference>
<dbReference type="PaxDb" id="224308-BSU22060"/>
<dbReference type="EnsemblBacteria" id="CAB14123">
    <property type="protein sequence ID" value="CAB14123"/>
    <property type="gene ID" value="BSU_22060"/>
</dbReference>
<dbReference type="GeneID" id="939068"/>
<dbReference type="KEGG" id="bsu:BSU22060"/>
<dbReference type="PATRIC" id="fig|224308.179.peg.2410"/>
<dbReference type="eggNOG" id="COG2233">
    <property type="taxonomic scope" value="Bacteria"/>
</dbReference>
<dbReference type="InParanoid" id="P42086"/>
<dbReference type="OrthoDB" id="9805749at2"/>
<dbReference type="PhylomeDB" id="P42086"/>
<dbReference type="BioCyc" id="BSUB:BSU22060-MONOMER"/>
<dbReference type="Proteomes" id="UP000001570">
    <property type="component" value="Chromosome"/>
</dbReference>
<dbReference type="GO" id="GO:0005886">
    <property type="term" value="C:plasma membrane"/>
    <property type="evidence" value="ECO:0000318"/>
    <property type="project" value="GO_Central"/>
</dbReference>
<dbReference type="GO" id="GO:0042907">
    <property type="term" value="F:xanthine transmembrane transporter activity"/>
    <property type="evidence" value="ECO:0000318"/>
    <property type="project" value="GO_Central"/>
</dbReference>
<dbReference type="GO" id="GO:0042906">
    <property type="term" value="P:xanthine transport"/>
    <property type="evidence" value="ECO:0000318"/>
    <property type="project" value="GO_Central"/>
</dbReference>
<dbReference type="InterPro" id="IPR006043">
    <property type="entry name" value="NCS2"/>
</dbReference>
<dbReference type="InterPro" id="IPR017588">
    <property type="entry name" value="UacT-like"/>
</dbReference>
<dbReference type="InterPro" id="IPR006042">
    <property type="entry name" value="Xan_ur_permease"/>
</dbReference>
<dbReference type="NCBIfam" id="TIGR00801">
    <property type="entry name" value="ncs2"/>
    <property type="match status" value="1"/>
</dbReference>
<dbReference type="NCBIfam" id="NF037981">
    <property type="entry name" value="NCS2_1"/>
    <property type="match status" value="1"/>
</dbReference>
<dbReference type="NCBIfam" id="TIGR03173">
    <property type="entry name" value="pbuX"/>
    <property type="match status" value="1"/>
</dbReference>
<dbReference type="PANTHER" id="PTHR42810">
    <property type="entry name" value="PURINE PERMEASE C1399.01C-RELATED"/>
    <property type="match status" value="1"/>
</dbReference>
<dbReference type="PANTHER" id="PTHR42810:SF4">
    <property type="entry name" value="URIC ACID TRANSPORTER UACT"/>
    <property type="match status" value="1"/>
</dbReference>
<dbReference type="Pfam" id="PF00860">
    <property type="entry name" value="Xan_ur_permease"/>
    <property type="match status" value="1"/>
</dbReference>
<dbReference type="PROSITE" id="PS01116">
    <property type="entry name" value="XANTH_URACIL_PERMASE"/>
    <property type="match status" value="1"/>
</dbReference>
<name>PBUX_BACSU</name>
<feature type="chain" id="PRO_0000165962" description="Xanthine permease">
    <location>
        <begin position="1"/>
        <end position="438"/>
    </location>
</feature>
<feature type="transmembrane region" description="Helical" evidence="1">
    <location>
        <begin position="11"/>
        <end position="31"/>
    </location>
</feature>
<feature type="transmembrane region" description="Helical" evidence="1">
    <location>
        <begin position="41"/>
        <end position="61"/>
    </location>
</feature>
<feature type="transmembrane region" description="Helical" evidence="1">
    <location>
        <begin position="65"/>
        <end position="85"/>
    </location>
</feature>
<feature type="transmembrane region" description="Helical" evidence="1">
    <location>
        <begin position="100"/>
        <end position="120"/>
    </location>
</feature>
<feature type="transmembrane region" description="Helical" evidence="1">
    <location>
        <begin position="121"/>
        <end position="141"/>
    </location>
</feature>
<feature type="transmembrane region" description="Helical" evidence="1">
    <location>
        <begin position="154"/>
        <end position="174"/>
    </location>
</feature>
<feature type="transmembrane region" description="Helical" evidence="1">
    <location>
        <begin position="180"/>
        <end position="200"/>
    </location>
</feature>
<feature type="transmembrane region" description="Helical" evidence="1">
    <location>
        <begin position="220"/>
        <end position="240"/>
    </location>
</feature>
<feature type="transmembrane region" description="Helical" evidence="1">
    <location>
        <begin position="272"/>
        <end position="292"/>
    </location>
</feature>
<feature type="transmembrane region" description="Helical" evidence="1">
    <location>
        <begin position="308"/>
        <end position="328"/>
    </location>
</feature>
<feature type="transmembrane region" description="Helical" evidence="1">
    <location>
        <begin position="331"/>
        <end position="351"/>
    </location>
</feature>
<feature type="transmembrane region" description="Helical" evidence="1">
    <location>
        <begin position="367"/>
        <end position="387"/>
    </location>
</feature>
<feature type="transmembrane region" description="Helical" evidence="1">
    <location>
        <begin position="396"/>
        <end position="416"/>
    </location>
</feature>